<proteinExistence type="inferred from homology"/>
<keyword id="KW-0997">Cell inner membrane</keyword>
<keyword id="KW-1003">Cell membrane</keyword>
<keyword id="KW-0175">Coiled coil</keyword>
<keyword id="KW-0963">Cytoplasm</keyword>
<keyword id="KW-0472">Membrane</keyword>
<reference key="1">
    <citation type="submission" date="2008-02" db="EMBL/GenBank/DDBJ databases">
        <title>Complete sequence of Escherichia coli C str. ATCC 8739.</title>
        <authorList>
            <person name="Copeland A."/>
            <person name="Lucas S."/>
            <person name="Lapidus A."/>
            <person name="Glavina del Rio T."/>
            <person name="Dalin E."/>
            <person name="Tice H."/>
            <person name="Bruce D."/>
            <person name="Goodwin L."/>
            <person name="Pitluck S."/>
            <person name="Kiss H."/>
            <person name="Brettin T."/>
            <person name="Detter J.C."/>
            <person name="Han C."/>
            <person name="Kuske C.R."/>
            <person name="Schmutz J."/>
            <person name="Larimer F."/>
            <person name="Land M."/>
            <person name="Hauser L."/>
            <person name="Kyrpides N."/>
            <person name="Mikhailova N."/>
            <person name="Ingram L."/>
            <person name="Richardson P."/>
        </authorList>
    </citation>
    <scope>NUCLEOTIDE SEQUENCE [LARGE SCALE GENOMIC DNA]</scope>
    <source>
        <strain>ATCC 8739 / DSM 1576 / NBRC 3972 / NCIMB 8545 / WDCM 00012 / Crooks</strain>
    </source>
</reference>
<accession>B1IUD5</accession>
<dbReference type="EMBL" id="CP000946">
    <property type="protein sequence ID" value="ACA78102.1"/>
    <property type="molecule type" value="Genomic_DNA"/>
</dbReference>
<dbReference type="RefSeq" id="WP_001297479.1">
    <property type="nucleotide sequence ID" value="NZ_MTFT01000032.1"/>
</dbReference>
<dbReference type="SMR" id="B1IUD5"/>
<dbReference type="GeneID" id="93776278"/>
<dbReference type="KEGG" id="ecl:EcolC_2471"/>
<dbReference type="HOGENOM" id="CLU_098920_0_0_6"/>
<dbReference type="GO" id="GO:0005737">
    <property type="term" value="C:cytoplasm"/>
    <property type="evidence" value="ECO:0007669"/>
    <property type="project" value="UniProtKB-SubCell"/>
</dbReference>
<dbReference type="GO" id="GO:0005886">
    <property type="term" value="C:plasma membrane"/>
    <property type="evidence" value="ECO:0007669"/>
    <property type="project" value="UniProtKB-SubCell"/>
</dbReference>
<dbReference type="FunFam" id="1.10.3890.10:FF:000001">
    <property type="entry name" value="High frequency lysogenization protein HflD homolog"/>
    <property type="match status" value="1"/>
</dbReference>
<dbReference type="Gene3D" id="1.10.3890.10">
    <property type="entry name" value="HflD-like"/>
    <property type="match status" value="1"/>
</dbReference>
<dbReference type="HAMAP" id="MF_00695">
    <property type="entry name" value="HflD_protein"/>
    <property type="match status" value="1"/>
</dbReference>
<dbReference type="InterPro" id="IPR007451">
    <property type="entry name" value="HflD"/>
</dbReference>
<dbReference type="InterPro" id="IPR035932">
    <property type="entry name" value="HflD-like_sf"/>
</dbReference>
<dbReference type="NCBIfam" id="NF001245">
    <property type="entry name" value="PRK00218.1-1"/>
    <property type="match status" value="1"/>
</dbReference>
<dbReference type="NCBIfam" id="NF001246">
    <property type="entry name" value="PRK00218.1-2"/>
    <property type="match status" value="1"/>
</dbReference>
<dbReference type="NCBIfam" id="NF001248">
    <property type="entry name" value="PRK00218.1-4"/>
    <property type="match status" value="1"/>
</dbReference>
<dbReference type="NCBIfam" id="NF001249">
    <property type="entry name" value="PRK00218.1-5"/>
    <property type="match status" value="1"/>
</dbReference>
<dbReference type="PANTHER" id="PTHR38100">
    <property type="entry name" value="HIGH FREQUENCY LYSOGENIZATION PROTEIN HFLD"/>
    <property type="match status" value="1"/>
</dbReference>
<dbReference type="PANTHER" id="PTHR38100:SF1">
    <property type="entry name" value="HIGH FREQUENCY LYSOGENIZATION PROTEIN HFLD"/>
    <property type="match status" value="1"/>
</dbReference>
<dbReference type="Pfam" id="PF04356">
    <property type="entry name" value="DUF489"/>
    <property type="match status" value="1"/>
</dbReference>
<dbReference type="SUPFAM" id="SSF101322">
    <property type="entry name" value="YcfC-like"/>
    <property type="match status" value="1"/>
</dbReference>
<feature type="chain" id="PRO_1000083177" description="High frequency lysogenization protein HflD">
    <location>
        <begin position="1"/>
        <end position="213"/>
    </location>
</feature>
<feature type="coiled-coil region" evidence="1">
    <location>
        <begin position="79"/>
        <end position="126"/>
    </location>
</feature>
<gene>
    <name evidence="1" type="primary">hflD</name>
    <name type="ordered locus">EcolC_2471</name>
</gene>
<protein>
    <recommendedName>
        <fullName evidence="1">High frequency lysogenization protein HflD</fullName>
    </recommendedName>
</protein>
<evidence type="ECO:0000255" key="1">
    <source>
        <dbReference type="HAMAP-Rule" id="MF_00695"/>
    </source>
</evidence>
<sequence length="213" mass="22948">MAKNYYDITLALAGICQSARLVQQLAHQGHCDADALHVSLNSIIDMNPSSTLAVFGGSEANLRVGLETLLGVLNASSRQGLNAELTRYTLSLMVLERKLSSAKGALDTLGNRINGLQRQLEHFDLQSETLMSAMAAIYVDVISPLGPRIQVTGSPAVLQSPQVQAKVRATLLAGIRAAVLWHQVGGGRLQLMFSRNRLTTQAKQILAHLTPEL</sequence>
<comment type="function">
    <text evidence="1">Negative regulator of phage lambda lysogenization. Contributes to the degradation of the phage regulatory protein CII. Acts probably by holding CII on the membrane surface, away from the target promoters, but close to the FtsH protease.</text>
</comment>
<comment type="subunit">
    <text evidence="1">Interacts with CII protein from phage lambda.</text>
</comment>
<comment type="subcellular location">
    <subcellularLocation>
        <location>Cytoplasm</location>
    </subcellularLocation>
    <subcellularLocation>
        <location evidence="1">Cell inner membrane</location>
        <topology evidence="1">Peripheral membrane protein</topology>
        <orientation evidence="1">Cytoplasmic side</orientation>
    </subcellularLocation>
</comment>
<comment type="similarity">
    <text evidence="1">Belongs to the HflD family.</text>
</comment>
<organism>
    <name type="scientific">Escherichia coli (strain ATCC 8739 / DSM 1576 / NBRC 3972 / NCIMB 8545 / WDCM 00012 / Crooks)</name>
    <dbReference type="NCBI Taxonomy" id="481805"/>
    <lineage>
        <taxon>Bacteria</taxon>
        <taxon>Pseudomonadati</taxon>
        <taxon>Pseudomonadota</taxon>
        <taxon>Gammaproteobacteria</taxon>
        <taxon>Enterobacterales</taxon>
        <taxon>Enterobacteriaceae</taxon>
        <taxon>Escherichia</taxon>
    </lineage>
</organism>
<name>HFLD_ECOLC</name>